<protein>
    <recommendedName>
        <fullName>Cytidine deaminase 2</fullName>
        <ecNumber>3.5.4.5</ecNumber>
    </recommendedName>
</protein>
<name>CDA2_ARATH</name>
<feature type="chain" id="PRO_0000429144" description="Cytidine deaminase 2">
    <location>
        <begin position="1"/>
        <end position="337"/>
    </location>
</feature>
<feature type="domain" description="CMP/dCMP-type deaminase 1" evidence="2">
    <location>
        <begin position="43"/>
        <end position="164"/>
    </location>
</feature>
<feature type="domain" description="CMP/dCMP-type deaminase 2" evidence="2">
    <location>
        <begin position="199"/>
        <end position="320"/>
    </location>
</feature>
<feature type="active site" description="Proton donor" evidence="1">
    <location>
        <position position="99"/>
    </location>
</feature>
<feature type="binding site" evidence="1">
    <location>
        <begin position="84"/>
        <end position="86"/>
    </location>
    <ligand>
        <name>substrate</name>
    </ligand>
</feature>
<feature type="binding site" evidence="1">
    <location>
        <position position="97"/>
    </location>
    <ligand>
        <name>Zn(2+)</name>
        <dbReference type="ChEBI" id="CHEBI:29105"/>
        <note>catalytic</note>
    </ligand>
</feature>
<feature type="binding site" evidence="1">
    <location>
        <position position="132"/>
    </location>
    <ligand>
        <name>Zn(2+)</name>
        <dbReference type="ChEBI" id="CHEBI:29105"/>
        <note>catalytic</note>
    </ligand>
</feature>
<feature type="binding site" evidence="1">
    <location>
        <position position="135"/>
    </location>
    <ligand>
        <name>Zn(2+)</name>
        <dbReference type="ChEBI" id="CHEBI:29105"/>
        <note>catalytic</note>
    </ligand>
</feature>
<feature type="sequence conflict" description="In Ref. 2; AAC69567." evidence="3" ref="2">
    <original>P</original>
    <variation>T</variation>
    <location>
        <position position="218"/>
    </location>
</feature>
<accession>O65571</accession>
<accession>A0MFA8</accession>
<accession>Q9SWZ4</accession>
<sequence>MAQRPNLLSHLQDLVTKFKNMTMAQDRFKFVFTANEAALEGVTDPIRLPNLIRKAMCLARAPISKYKVGAVGRASSGRVYLGVNVDFPGLPLHHSIHAEQFLVTNLALNYEKDLCKLAVAISTDGLEFGTPCGNCLQFLMEMSNALDMKILSKPKHEAGSFSSLRLLLPNVLPKGSPFLLEKRYNCLTLSGSAGEICSLDCSHLKRRALAAANNSFSPYTESPSGVALLDNDGNWYRGWYIESVASNPSLGPVQAALVDFVARSRGKMFNKIVQAVLVEKNNASVSQERTAKIILDTIAPNCDFKVFHCSVDCAKRLKYLRETLVIDTLGDYTGLHY</sequence>
<proteinExistence type="evidence at transcript level"/>
<evidence type="ECO:0000250" key="1"/>
<evidence type="ECO:0000255" key="2">
    <source>
        <dbReference type="PROSITE-ProRule" id="PRU01083"/>
    </source>
</evidence>
<evidence type="ECO:0000305" key="3"/>
<keyword id="KW-0378">Hydrolase</keyword>
<keyword id="KW-0479">Metal-binding</keyword>
<keyword id="KW-1185">Reference proteome</keyword>
<keyword id="KW-0862">Zinc</keyword>
<dbReference type="EC" id="3.5.4.5"/>
<dbReference type="EMBL" id="AF121877">
    <property type="protein sequence ID" value="AAD30445.1"/>
    <property type="molecule type" value="Genomic_DNA"/>
</dbReference>
<dbReference type="EMBL" id="AJ005811">
    <property type="protein sequence ID" value="CAA06710.1"/>
    <property type="molecule type" value="mRNA"/>
</dbReference>
<dbReference type="EMBL" id="AF080676">
    <property type="protein sequence ID" value="AAC69567.2"/>
    <property type="molecule type" value="Genomic_DNA"/>
</dbReference>
<dbReference type="EMBL" id="AL079344">
    <property type="protein sequence ID" value="CAB45322.1"/>
    <property type="molecule type" value="Genomic_DNA"/>
</dbReference>
<dbReference type="EMBL" id="AL161575">
    <property type="protein sequence ID" value="CAB79720.1"/>
    <property type="molecule type" value="Genomic_DNA"/>
</dbReference>
<dbReference type="EMBL" id="CP002687">
    <property type="protein sequence ID" value="AEE85652.1"/>
    <property type="molecule type" value="Genomic_DNA"/>
</dbReference>
<dbReference type="EMBL" id="DQ446882">
    <property type="protein sequence ID" value="ABE66101.1"/>
    <property type="molecule type" value="mRNA"/>
</dbReference>
<dbReference type="EMBL" id="DQ653234">
    <property type="protein sequence ID" value="ABK28657.1"/>
    <property type="status" value="ALT_SEQ"/>
    <property type="molecule type" value="mRNA"/>
</dbReference>
<dbReference type="PIR" id="T09925">
    <property type="entry name" value="T09925"/>
</dbReference>
<dbReference type="RefSeq" id="NP_194691.1">
    <property type="nucleotide sequence ID" value="NM_119107.3"/>
</dbReference>
<dbReference type="SMR" id="O65571"/>
<dbReference type="FunCoup" id="O65571">
    <property type="interactions" value="126"/>
</dbReference>
<dbReference type="STRING" id="3702.O65571"/>
<dbReference type="PaxDb" id="3702-AT4G29620.1"/>
<dbReference type="EnsemblPlants" id="AT4G29620.1">
    <property type="protein sequence ID" value="AT4G29620.1"/>
    <property type="gene ID" value="AT4G29620"/>
</dbReference>
<dbReference type="GeneID" id="829083"/>
<dbReference type="Gramene" id="AT4G29620.1">
    <property type="protein sequence ID" value="AT4G29620.1"/>
    <property type="gene ID" value="AT4G29620"/>
</dbReference>
<dbReference type="KEGG" id="ath:AT4G29620"/>
<dbReference type="Araport" id="AT4G29620"/>
<dbReference type="TAIR" id="AT4G29620"/>
<dbReference type="eggNOG" id="KOG0833">
    <property type="taxonomic scope" value="Eukaryota"/>
</dbReference>
<dbReference type="HOGENOM" id="CLU_052424_1_0_1"/>
<dbReference type="InParanoid" id="O65571"/>
<dbReference type="OMA" id="NMTMAQD"/>
<dbReference type="OrthoDB" id="414540at2759"/>
<dbReference type="PhylomeDB" id="O65571"/>
<dbReference type="BioCyc" id="ARA:AT4G29620-MONOMER"/>
<dbReference type="PRO" id="PR:O65571"/>
<dbReference type="Proteomes" id="UP000006548">
    <property type="component" value="Chromosome 4"/>
</dbReference>
<dbReference type="ExpressionAtlas" id="O65571">
    <property type="expression patterns" value="baseline and differential"/>
</dbReference>
<dbReference type="GO" id="GO:0005737">
    <property type="term" value="C:cytoplasm"/>
    <property type="evidence" value="ECO:0007669"/>
    <property type="project" value="UniProtKB-ARBA"/>
</dbReference>
<dbReference type="GO" id="GO:0004126">
    <property type="term" value="F:cytidine deaminase activity"/>
    <property type="evidence" value="ECO:0007669"/>
    <property type="project" value="UniProtKB-EC"/>
</dbReference>
<dbReference type="GO" id="GO:0042802">
    <property type="term" value="F:identical protein binding"/>
    <property type="evidence" value="ECO:0007669"/>
    <property type="project" value="UniProtKB-ARBA"/>
</dbReference>
<dbReference type="GO" id="GO:0008270">
    <property type="term" value="F:zinc ion binding"/>
    <property type="evidence" value="ECO:0007669"/>
    <property type="project" value="InterPro"/>
</dbReference>
<dbReference type="GO" id="GO:0009972">
    <property type="term" value="P:cytidine deamination"/>
    <property type="evidence" value="ECO:0007669"/>
    <property type="project" value="InterPro"/>
</dbReference>
<dbReference type="CDD" id="cd01283">
    <property type="entry name" value="cytidine_deaminase"/>
    <property type="match status" value="1"/>
</dbReference>
<dbReference type="FunFam" id="3.40.140.10:FF:000006">
    <property type="entry name" value="Cytidine deaminase"/>
    <property type="match status" value="1"/>
</dbReference>
<dbReference type="FunFam" id="3.40.140.10:FF:000041">
    <property type="entry name" value="Cytidine deaminase"/>
    <property type="match status" value="1"/>
</dbReference>
<dbReference type="Gene3D" id="3.40.140.10">
    <property type="entry name" value="Cytidine Deaminase, domain 2"/>
    <property type="match status" value="2"/>
</dbReference>
<dbReference type="InterPro" id="IPR016192">
    <property type="entry name" value="APOBEC/CMP_deaminase_Zn-bd"/>
</dbReference>
<dbReference type="InterPro" id="IPR002125">
    <property type="entry name" value="CMP_dCMP_dom"/>
</dbReference>
<dbReference type="InterPro" id="IPR013171">
    <property type="entry name" value="Cyd/dCyd_deaminase_Zn-bd"/>
</dbReference>
<dbReference type="InterPro" id="IPR050202">
    <property type="entry name" value="Cyt/Deoxycyt_deaminase"/>
</dbReference>
<dbReference type="InterPro" id="IPR006263">
    <property type="entry name" value="Cyt_deam_dimer"/>
</dbReference>
<dbReference type="InterPro" id="IPR016193">
    <property type="entry name" value="Cytidine_deaminase-like"/>
</dbReference>
<dbReference type="NCBIfam" id="TIGR01355">
    <property type="entry name" value="cyt_deam_dimer"/>
    <property type="match status" value="1"/>
</dbReference>
<dbReference type="NCBIfam" id="NF006537">
    <property type="entry name" value="PRK09027.1"/>
    <property type="match status" value="1"/>
</dbReference>
<dbReference type="PANTHER" id="PTHR11644">
    <property type="entry name" value="CYTIDINE DEAMINASE"/>
    <property type="match status" value="1"/>
</dbReference>
<dbReference type="PANTHER" id="PTHR11644:SF2">
    <property type="entry name" value="CYTIDINE DEAMINASE"/>
    <property type="match status" value="1"/>
</dbReference>
<dbReference type="Pfam" id="PF00383">
    <property type="entry name" value="dCMP_cyt_deam_1"/>
    <property type="match status" value="1"/>
</dbReference>
<dbReference type="Pfam" id="PF08211">
    <property type="entry name" value="dCMP_cyt_deam_2"/>
    <property type="match status" value="1"/>
</dbReference>
<dbReference type="PIRSF" id="PIRSF006334">
    <property type="entry name" value="Cdd_plus_pseudo"/>
    <property type="match status" value="1"/>
</dbReference>
<dbReference type="SUPFAM" id="SSF53927">
    <property type="entry name" value="Cytidine deaminase-like"/>
    <property type="match status" value="2"/>
</dbReference>
<dbReference type="PROSITE" id="PS00903">
    <property type="entry name" value="CYT_DCMP_DEAMINASES_1"/>
    <property type="match status" value="1"/>
</dbReference>
<dbReference type="PROSITE" id="PS51747">
    <property type="entry name" value="CYT_DCMP_DEAMINASES_2"/>
    <property type="match status" value="2"/>
</dbReference>
<gene>
    <name type="primary">CDA2</name>
    <name type="synonym">DESE</name>
    <name type="ordered locus">At4g29620</name>
    <name type="ORF">T16L4.130</name>
</gene>
<organism>
    <name type="scientific">Arabidopsis thaliana</name>
    <name type="common">Mouse-ear cress</name>
    <dbReference type="NCBI Taxonomy" id="3702"/>
    <lineage>
        <taxon>Eukaryota</taxon>
        <taxon>Viridiplantae</taxon>
        <taxon>Streptophyta</taxon>
        <taxon>Embryophyta</taxon>
        <taxon>Tracheophyta</taxon>
        <taxon>Spermatophyta</taxon>
        <taxon>Magnoliopsida</taxon>
        <taxon>eudicotyledons</taxon>
        <taxon>Gunneridae</taxon>
        <taxon>Pentapetalae</taxon>
        <taxon>rosids</taxon>
        <taxon>malvids</taxon>
        <taxon>Brassicales</taxon>
        <taxon>Brassicaceae</taxon>
        <taxon>Camelineae</taxon>
        <taxon>Arabidopsis</taxon>
    </lineage>
</organism>
<comment type="function">
    <text evidence="1">This enzyme scavenges exogenous and endogenous cytidine and 2'-deoxycytidine for UMP synthesis.</text>
</comment>
<comment type="catalytic activity">
    <reaction>
        <text>cytidine + H2O + H(+) = uridine + NH4(+)</text>
        <dbReference type="Rhea" id="RHEA:16069"/>
        <dbReference type="ChEBI" id="CHEBI:15377"/>
        <dbReference type="ChEBI" id="CHEBI:15378"/>
        <dbReference type="ChEBI" id="CHEBI:16704"/>
        <dbReference type="ChEBI" id="CHEBI:17562"/>
        <dbReference type="ChEBI" id="CHEBI:28938"/>
        <dbReference type="EC" id="3.5.4.5"/>
    </reaction>
</comment>
<comment type="catalytic activity">
    <reaction>
        <text>2'-deoxycytidine + H2O + H(+) = 2'-deoxyuridine + NH4(+)</text>
        <dbReference type="Rhea" id="RHEA:13433"/>
        <dbReference type="ChEBI" id="CHEBI:15377"/>
        <dbReference type="ChEBI" id="CHEBI:15378"/>
        <dbReference type="ChEBI" id="CHEBI:15698"/>
        <dbReference type="ChEBI" id="CHEBI:16450"/>
        <dbReference type="ChEBI" id="CHEBI:28938"/>
        <dbReference type="EC" id="3.5.4.5"/>
    </reaction>
</comment>
<comment type="cofactor">
    <cofactor evidence="1">
        <name>Zn(2+)</name>
        <dbReference type="ChEBI" id="CHEBI:29105"/>
    </cofactor>
    <text evidence="1">Binds 1 zinc ion per subunit.</text>
</comment>
<comment type="subunit">
    <text evidence="1">Homodimer.</text>
</comment>
<comment type="similarity">
    <text evidence="3">Belongs to the cytidine and deoxycytidylate deaminase family.</text>
</comment>
<comment type="sequence caution" evidence="3">
    <conflict type="erroneous termination">
        <sequence resource="EMBL-CDS" id="ABK28657"/>
    </conflict>
    <text>Extended C-terminus.</text>
</comment>
<reference key="1">
    <citation type="submission" date="1999-01" db="EMBL/GenBank/DDBJ databases">
        <title>Cytidine deaminases in Arabidopsis thaliana: a gene family of eight members are located within a 24 kb region.</title>
        <authorList>
            <person name="Sanchez H."/>
            <person name="Schuster W."/>
        </authorList>
    </citation>
    <scope>NUCLEOTIDE SEQUENCE [GENOMIC DNA]</scope>
    <source>
        <strain>cv. Columbia</strain>
    </source>
</reference>
<reference key="2">
    <citation type="submission" date="1999-06" db="EMBL/GenBank/DDBJ databases">
        <title>Cloning and characterisation of a cytidine deaminase gene family from Arabidopsis thaliana.</title>
        <authorList>
            <person name="Faivre Nitschke E.S."/>
            <person name="Grienenberger J.M."/>
            <person name="Gualberto J.M."/>
        </authorList>
    </citation>
    <scope>NUCLEOTIDE SEQUENCE [GENOMIC DNA / MRNA]</scope>
    <source>
        <strain>cv. Columbia</strain>
        <strain>cv. Landsberg erecta</strain>
    </source>
</reference>
<reference key="3">
    <citation type="journal article" date="1999" name="Nature">
        <title>Sequence and analysis of chromosome 4 of the plant Arabidopsis thaliana.</title>
        <authorList>
            <person name="Mayer K.F.X."/>
            <person name="Schueller C."/>
            <person name="Wambutt R."/>
            <person name="Murphy G."/>
            <person name="Volckaert G."/>
            <person name="Pohl T."/>
            <person name="Duesterhoeft A."/>
            <person name="Stiekema W."/>
            <person name="Entian K.-D."/>
            <person name="Terryn N."/>
            <person name="Harris B."/>
            <person name="Ansorge W."/>
            <person name="Brandt P."/>
            <person name="Grivell L.A."/>
            <person name="Rieger M."/>
            <person name="Weichselgartner M."/>
            <person name="de Simone V."/>
            <person name="Obermaier B."/>
            <person name="Mache R."/>
            <person name="Mueller M."/>
            <person name="Kreis M."/>
            <person name="Delseny M."/>
            <person name="Puigdomenech P."/>
            <person name="Watson M."/>
            <person name="Schmidtheini T."/>
            <person name="Reichert B."/>
            <person name="Portetelle D."/>
            <person name="Perez-Alonso M."/>
            <person name="Boutry M."/>
            <person name="Bancroft I."/>
            <person name="Vos P."/>
            <person name="Hoheisel J."/>
            <person name="Zimmermann W."/>
            <person name="Wedler H."/>
            <person name="Ridley P."/>
            <person name="Langham S.-A."/>
            <person name="McCullagh B."/>
            <person name="Bilham L."/>
            <person name="Robben J."/>
            <person name="van der Schueren J."/>
            <person name="Grymonprez B."/>
            <person name="Chuang Y.-J."/>
            <person name="Vandenbussche F."/>
            <person name="Braeken M."/>
            <person name="Weltjens I."/>
            <person name="Voet M."/>
            <person name="Bastiaens I."/>
            <person name="Aert R."/>
            <person name="Defoor E."/>
            <person name="Weitzenegger T."/>
            <person name="Bothe G."/>
            <person name="Ramsperger U."/>
            <person name="Hilbert H."/>
            <person name="Braun M."/>
            <person name="Holzer E."/>
            <person name="Brandt A."/>
            <person name="Peters S."/>
            <person name="van Staveren M."/>
            <person name="Dirkse W."/>
            <person name="Mooijman P."/>
            <person name="Klein Lankhorst R."/>
            <person name="Rose M."/>
            <person name="Hauf J."/>
            <person name="Koetter P."/>
            <person name="Berneiser S."/>
            <person name="Hempel S."/>
            <person name="Feldpausch M."/>
            <person name="Lamberth S."/>
            <person name="Van den Daele H."/>
            <person name="De Keyser A."/>
            <person name="Buysshaert C."/>
            <person name="Gielen J."/>
            <person name="Villarroel R."/>
            <person name="De Clercq R."/>
            <person name="van Montagu M."/>
            <person name="Rogers J."/>
            <person name="Cronin A."/>
            <person name="Quail M.A."/>
            <person name="Bray-Allen S."/>
            <person name="Clark L."/>
            <person name="Doggett J."/>
            <person name="Hall S."/>
            <person name="Kay M."/>
            <person name="Lennard N."/>
            <person name="McLay K."/>
            <person name="Mayes R."/>
            <person name="Pettett A."/>
            <person name="Rajandream M.A."/>
            <person name="Lyne M."/>
            <person name="Benes V."/>
            <person name="Rechmann S."/>
            <person name="Borkova D."/>
            <person name="Bloecker H."/>
            <person name="Scharfe M."/>
            <person name="Grimm M."/>
            <person name="Loehnert T.-H."/>
            <person name="Dose S."/>
            <person name="de Haan M."/>
            <person name="Maarse A.C."/>
            <person name="Schaefer M."/>
            <person name="Mueller-Auer S."/>
            <person name="Gabel C."/>
            <person name="Fuchs M."/>
            <person name="Fartmann B."/>
            <person name="Granderath K."/>
            <person name="Dauner D."/>
            <person name="Herzl A."/>
            <person name="Neumann S."/>
            <person name="Argiriou A."/>
            <person name="Vitale D."/>
            <person name="Liguori R."/>
            <person name="Piravandi E."/>
            <person name="Massenet O."/>
            <person name="Quigley F."/>
            <person name="Clabauld G."/>
            <person name="Muendlein A."/>
            <person name="Felber R."/>
            <person name="Schnabl S."/>
            <person name="Hiller R."/>
            <person name="Schmidt W."/>
            <person name="Lecharny A."/>
            <person name="Aubourg S."/>
            <person name="Chefdor F."/>
            <person name="Cooke R."/>
            <person name="Berger C."/>
            <person name="Monfort A."/>
            <person name="Casacuberta E."/>
            <person name="Gibbons T."/>
            <person name="Weber N."/>
            <person name="Vandenbol M."/>
            <person name="Bargues M."/>
            <person name="Terol J."/>
            <person name="Torres A."/>
            <person name="Perez-Perez A."/>
            <person name="Purnelle B."/>
            <person name="Bent E."/>
            <person name="Johnson S."/>
            <person name="Tacon D."/>
            <person name="Jesse T."/>
            <person name="Heijnen L."/>
            <person name="Schwarz S."/>
            <person name="Scholler P."/>
            <person name="Heber S."/>
            <person name="Francs P."/>
            <person name="Bielke C."/>
            <person name="Frishman D."/>
            <person name="Haase D."/>
            <person name="Lemcke K."/>
            <person name="Mewes H.-W."/>
            <person name="Stocker S."/>
            <person name="Zaccaria P."/>
            <person name="Bevan M."/>
            <person name="Wilson R.K."/>
            <person name="de la Bastide M."/>
            <person name="Habermann K."/>
            <person name="Parnell L."/>
            <person name="Dedhia N."/>
            <person name="Gnoj L."/>
            <person name="Schutz K."/>
            <person name="Huang E."/>
            <person name="Spiegel L."/>
            <person name="Sekhon M."/>
            <person name="Murray J."/>
            <person name="Sheet P."/>
            <person name="Cordes M."/>
            <person name="Abu-Threideh J."/>
            <person name="Stoneking T."/>
            <person name="Kalicki J."/>
            <person name="Graves T."/>
            <person name="Harmon G."/>
            <person name="Edwards J."/>
            <person name="Latreille P."/>
            <person name="Courtney L."/>
            <person name="Cloud J."/>
            <person name="Abbott A."/>
            <person name="Scott K."/>
            <person name="Johnson D."/>
            <person name="Minx P."/>
            <person name="Bentley D."/>
            <person name="Fulton B."/>
            <person name="Miller N."/>
            <person name="Greco T."/>
            <person name="Kemp K."/>
            <person name="Kramer J."/>
            <person name="Fulton L."/>
            <person name="Mardis E."/>
            <person name="Dante M."/>
            <person name="Pepin K."/>
            <person name="Hillier L.W."/>
            <person name="Nelson J."/>
            <person name="Spieth J."/>
            <person name="Ryan E."/>
            <person name="Andrews S."/>
            <person name="Geisel C."/>
            <person name="Layman D."/>
            <person name="Du H."/>
            <person name="Ali J."/>
            <person name="Berghoff A."/>
            <person name="Jones K."/>
            <person name="Drone K."/>
            <person name="Cotton M."/>
            <person name="Joshu C."/>
            <person name="Antonoiu B."/>
            <person name="Zidanic M."/>
            <person name="Strong C."/>
            <person name="Sun H."/>
            <person name="Lamar B."/>
            <person name="Yordan C."/>
            <person name="Ma P."/>
            <person name="Zhong J."/>
            <person name="Preston R."/>
            <person name="Vil D."/>
            <person name="Shekher M."/>
            <person name="Matero A."/>
            <person name="Shah R."/>
            <person name="Swaby I.K."/>
            <person name="O'Shaughnessy A."/>
            <person name="Rodriguez M."/>
            <person name="Hoffman J."/>
            <person name="Till S."/>
            <person name="Granat S."/>
            <person name="Shohdy N."/>
            <person name="Hasegawa A."/>
            <person name="Hameed A."/>
            <person name="Lodhi M."/>
            <person name="Johnson A."/>
            <person name="Chen E."/>
            <person name="Marra M.A."/>
            <person name="Martienssen R."/>
            <person name="McCombie W.R."/>
        </authorList>
    </citation>
    <scope>NUCLEOTIDE SEQUENCE [LARGE SCALE GENOMIC DNA]</scope>
    <source>
        <strain>cv. Columbia</strain>
    </source>
</reference>
<reference key="4">
    <citation type="journal article" date="2017" name="Plant J.">
        <title>Araport11: a complete reannotation of the Arabidopsis thaliana reference genome.</title>
        <authorList>
            <person name="Cheng C.Y."/>
            <person name="Krishnakumar V."/>
            <person name="Chan A.P."/>
            <person name="Thibaud-Nissen F."/>
            <person name="Schobel S."/>
            <person name="Town C.D."/>
        </authorList>
    </citation>
    <scope>GENOME REANNOTATION</scope>
    <source>
        <strain>cv. Columbia</strain>
    </source>
</reference>
<reference key="5">
    <citation type="journal article" date="2006" name="Plant Biotechnol. J.">
        <title>Simultaneous high-throughput recombinational cloning of open reading frames in closed and open configurations.</title>
        <authorList>
            <person name="Underwood B.A."/>
            <person name="Vanderhaeghen R."/>
            <person name="Whitford R."/>
            <person name="Town C.D."/>
            <person name="Hilson P."/>
        </authorList>
    </citation>
    <scope>NUCLEOTIDE SEQUENCE [LARGE SCALE MRNA]</scope>
    <source>
        <strain>cv. Columbia</strain>
    </source>
</reference>